<gene>
    <name type="ordered locus">MJ0416</name>
</gene>
<evidence type="ECO:0000255" key="1"/>
<feature type="chain" id="PRO_0000106862" description="Double zinc ribbon protein MJ0416">
    <location>
        <begin position="1"/>
        <end position="190"/>
    </location>
</feature>
<feature type="zinc finger region" description="DZANK-type" evidence="1">
    <location>
        <begin position="134"/>
        <end position="183"/>
    </location>
</feature>
<protein>
    <recommendedName>
        <fullName>Double zinc ribbon protein MJ0416</fullName>
    </recommendedName>
</protein>
<keyword id="KW-0479">Metal-binding</keyword>
<keyword id="KW-1185">Reference proteome</keyword>
<keyword id="KW-0862">Zinc</keyword>
<keyword id="KW-0863">Zinc-finger</keyword>
<reference key="1">
    <citation type="journal article" date="1996" name="Science">
        <title>Complete genome sequence of the methanogenic archaeon, Methanococcus jannaschii.</title>
        <authorList>
            <person name="Bult C.J."/>
            <person name="White O."/>
            <person name="Olsen G.J."/>
            <person name="Zhou L."/>
            <person name="Fleischmann R.D."/>
            <person name="Sutton G.G."/>
            <person name="Blake J.A."/>
            <person name="FitzGerald L.M."/>
            <person name="Clayton R.A."/>
            <person name="Gocayne J.D."/>
            <person name="Kerlavage A.R."/>
            <person name="Dougherty B.A."/>
            <person name="Tomb J.-F."/>
            <person name="Adams M.D."/>
            <person name="Reich C.I."/>
            <person name="Overbeek R."/>
            <person name="Kirkness E.F."/>
            <person name="Weinstock K.G."/>
            <person name="Merrick J.M."/>
            <person name="Glodek A."/>
            <person name="Scott J.L."/>
            <person name="Geoghagen N.S.M."/>
            <person name="Weidman J.F."/>
            <person name="Fuhrmann J.L."/>
            <person name="Nguyen D."/>
            <person name="Utterback T.R."/>
            <person name="Kelley J.M."/>
            <person name="Peterson J.D."/>
            <person name="Sadow P.W."/>
            <person name="Hanna M.C."/>
            <person name="Cotton M.D."/>
            <person name="Roberts K.M."/>
            <person name="Hurst M.A."/>
            <person name="Kaine B.P."/>
            <person name="Borodovsky M."/>
            <person name="Klenk H.-P."/>
            <person name="Fraser C.M."/>
            <person name="Smith H.O."/>
            <person name="Woese C.R."/>
            <person name="Venter J.C."/>
        </authorList>
    </citation>
    <scope>NUCLEOTIDE SEQUENCE [LARGE SCALE GENOMIC DNA]</scope>
    <source>
        <strain>ATCC 43067 / DSM 2661 / JAL-1 / JCM 10045 / NBRC 100440</strain>
    </source>
</reference>
<proteinExistence type="predicted"/>
<sequence length="190" mass="21889">MVRVVPLTDEEKMSIVSGLRSSVPATKLVTLRKLQEIAEVRPEAILYLDTYDKVTLNEIITLLNQIIEYDPDEILRREAMITLEKVKKALGTKFSTFVPLCNSCKSPIDLGWTYCTNCGAEIKNMTFEEEVERCPNCNNYISDSWKYCAHCGAKLKEEEEEVLRCPNCKRPVQPEWIVCPYCGYRLKRKP</sequence>
<accession>Q57859</accession>
<dbReference type="EMBL" id="L77117">
    <property type="protein sequence ID" value="AAB98407.1"/>
    <property type="molecule type" value="Genomic_DNA"/>
</dbReference>
<dbReference type="PIR" id="H64351">
    <property type="entry name" value="H64351"/>
</dbReference>
<dbReference type="RefSeq" id="WP_010869915.1">
    <property type="nucleotide sequence ID" value="NC_000909.1"/>
</dbReference>
<dbReference type="FunCoup" id="Q57859">
    <property type="interactions" value="8"/>
</dbReference>
<dbReference type="STRING" id="243232.MJ_0416"/>
<dbReference type="PaxDb" id="243232-MJ_0416"/>
<dbReference type="EnsemblBacteria" id="AAB98407">
    <property type="protein sequence ID" value="AAB98407"/>
    <property type="gene ID" value="MJ_0416"/>
</dbReference>
<dbReference type="GeneID" id="1451276"/>
<dbReference type="KEGG" id="mja:MJ_0416"/>
<dbReference type="eggNOG" id="arCOG01917">
    <property type="taxonomic scope" value="Archaea"/>
</dbReference>
<dbReference type="HOGENOM" id="CLU_1431668_0_0_2"/>
<dbReference type="InParanoid" id="Q57859"/>
<dbReference type="OrthoDB" id="145002at2157"/>
<dbReference type="Proteomes" id="UP000000805">
    <property type="component" value="Chromosome"/>
</dbReference>
<dbReference type="GO" id="GO:0008270">
    <property type="term" value="F:zinc ion binding"/>
    <property type="evidence" value="ECO:0007669"/>
    <property type="project" value="UniProtKB-KW"/>
</dbReference>
<dbReference type="InterPro" id="IPR016024">
    <property type="entry name" value="ARM-type_fold"/>
</dbReference>
<dbReference type="InterPro" id="IPR053281">
    <property type="entry name" value="Double_zinc_ribbon"/>
</dbReference>
<dbReference type="InterPro" id="IPR025874">
    <property type="entry name" value="DZR"/>
</dbReference>
<dbReference type="PANTHER" id="PTHR36718:SF1">
    <property type="entry name" value="DOUBLE ZINC RIBBON PROTEIN MJ0416"/>
    <property type="match status" value="1"/>
</dbReference>
<dbReference type="PANTHER" id="PTHR36718">
    <property type="entry name" value="OS05G0435400 PROTEIN"/>
    <property type="match status" value="1"/>
</dbReference>
<dbReference type="Pfam" id="PF12773">
    <property type="entry name" value="DZR"/>
    <property type="match status" value="1"/>
</dbReference>
<dbReference type="SUPFAM" id="SSF48371">
    <property type="entry name" value="ARM repeat"/>
    <property type="match status" value="1"/>
</dbReference>
<organism>
    <name type="scientific">Methanocaldococcus jannaschii (strain ATCC 43067 / DSM 2661 / JAL-1 / JCM 10045 / NBRC 100440)</name>
    <name type="common">Methanococcus jannaschii</name>
    <dbReference type="NCBI Taxonomy" id="243232"/>
    <lineage>
        <taxon>Archaea</taxon>
        <taxon>Methanobacteriati</taxon>
        <taxon>Methanobacteriota</taxon>
        <taxon>Methanomada group</taxon>
        <taxon>Methanococci</taxon>
        <taxon>Methanococcales</taxon>
        <taxon>Methanocaldococcaceae</taxon>
        <taxon>Methanocaldococcus</taxon>
    </lineage>
</organism>
<name>Y416_METJA</name>